<feature type="chain" id="PRO_1000095091" description="Elongation factor Tu">
    <location>
        <begin position="1"/>
        <end position="398"/>
    </location>
</feature>
<feature type="domain" description="tr-type G">
    <location>
        <begin position="10"/>
        <end position="207"/>
    </location>
</feature>
<feature type="region of interest" description="G1" evidence="1">
    <location>
        <begin position="19"/>
        <end position="26"/>
    </location>
</feature>
<feature type="region of interest" description="G2" evidence="1">
    <location>
        <begin position="63"/>
        <end position="67"/>
    </location>
</feature>
<feature type="region of interest" description="G3" evidence="1">
    <location>
        <begin position="84"/>
        <end position="87"/>
    </location>
</feature>
<feature type="region of interest" description="G4" evidence="1">
    <location>
        <begin position="139"/>
        <end position="142"/>
    </location>
</feature>
<feature type="region of interest" description="G5" evidence="1">
    <location>
        <begin position="177"/>
        <end position="179"/>
    </location>
</feature>
<feature type="binding site" evidence="2">
    <location>
        <begin position="19"/>
        <end position="26"/>
    </location>
    <ligand>
        <name>GTP</name>
        <dbReference type="ChEBI" id="CHEBI:37565"/>
    </ligand>
</feature>
<feature type="binding site" evidence="2">
    <location>
        <position position="26"/>
    </location>
    <ligand>
        <name>Mg(2+)</name>
        <dbReference type="ChEBI" id="CHEBI:18420"/>
    </ligand>
</feature>
<feature type="binding site" evidence="2">
    <location>
        <begin position="84"/>
        <end position="88"/>
    </location>
    <ligand>
        <name>GTP</name>
        <dbReference type="ChEBI" id="CHEBI:37565"/>
    </ligand>
</feature>
<feature type="binding site" evidence="2">
    <location>
        <begin position="139"/>
        <end position="142"/>
    </location>
    <ligand>
        <name>GTP</name>
        <dbReference type="ChEBI" id="CHEBI:37565"/>
    </ligand>
</feature>
<comment type="function">
    <text evidence="2">GTP hydrolase that promotes the GTP-dependent binding of aminoacyl-tRNA to the A-site of ribosomes during protein biosynthesis.</text>
</comment>
<comment type="catalytic activity">
    <reaction evidence="2">
        <text>GTP + H2O = GDP + phosphate + H(+)</text>
        <dbReference type="Rhea" id="RHEA:19669"/>
        <dbReference type="ChEBI" id="CHEBI:15377"/>
        <dbReference type="ChEBI" id="CHEBI:15378"/>
        <dbReference type="ChEBI" id="CHEBI:37565"/>
        <dbReference type="ChEBI" id="CHEBI:43474"/>
        <dbReference type="ChEBI" id="CHEBI:58189"/>
        <dbReference type="EC" id="3.6.5.3"/>
    </reaction>
    <physiologicalReaction direction="left-to-right" evidence="2">
        <dbReference type="Rhea" id="RHEA:19670"/>
    </physiologicalReaction>
</comment>
<comment type="subunit">
    <text evidence="2">Monomer.</text>
</comment>
<comment type="subcellular location">
    <subcellularLocation>
        <location evidence="2">Cytoplasm</location>
    </subcellularLocation>
</comment>
<comment type="similarity">
    <text evidence="2">Belongs to the TRAFAC class translation factor GTPase superfamily. Classic translation factor GTPase family. EF-Tu/EF-1A subfamily.</text>
</comment>
<sequence>MAKEKYDRSKPHVNIGTIGHVDHGKTTLTAAITTVLARRLPSSVNQPKDYASIDAAPEERERGITINTAHVEYETEKRHYAHIDAPGHADYVKNMITGAAQMDGAILVVASTDGPMPQTREHILLSRQVGVKHLIVFMNKVDLVDDEELLELVEMEIRDLLSEYDFPGDDLPVIQGSALKALEGDSKYEDIVMELMNTVDEYIPEPERDTDKPLLLPVEDVFSITGRGTVASGRIDRGIVKVNDEIEIVGIKEETQKAVVTGVEMFRKQLDEGLAGDNVGVLLRGVQRDEIERGQVIAKPGSINPHTKFKGEVYILTKEEGGRHTPFFNNYRPQFYFRTTDVTGSIELPAGTEMVMPGDNVTIDVELIHPIAVEQGTTFSIREGGRTVGSGMVTEIEA</sequence>
<keyword id="KW-0963">Cytoplasm</keyword>
<keyword id="KW-0251">Elongation factor</keyword>
<keyword id="KW-0342">GTP-binding</keyword>
<keyword id="KW-0378">Hydrolase</keyword>
<keyword id="KW-0460">Magnesium</keyword>
<keyword id="KW-0479">Metal-binding</keyword>
<keyword id="KW-0547">Nucleotide-binding</keyword>
<keyword id="KW-0648">Protein biosynthesis</keyword>
<evidence type="ECO:0000250" key="1"/>
<evidence type="ECO:0000255" key="2">
    <source>
        <dbReference type="HAMAP-Rule" id="MF_00118"/>
    </source>
</evidence>
<proteinExistence type="inferred from homology"/>
<organism>
    <name type="scientific">Streptococcus pneumoniae (strain Hungary19A-6)</name>
    <dbReference type="NCBI Taxonomy" id="487214"/>
    <lineage>
        <taxon>Bacteria</taxon>
        <taxon>Bacillati</taxon>
        <taxon>Bacillota</taxon>
        <taxon>Bacilli</taxon>
        <taxon>Lactobacillales</taxon>
        <taxon>Streptococcaceae</taxon>
        <taxon>Streptococcus</taxon>
    </lineage>
</organism>
<accession>B1ICR4</accession>
<protein>
    <recommendedName>
        <fullName evidence="2">Elongation factor Tu</fullName>
        <shortName evidence="2">EF-Tu</shortName>
        <ecNumber evidence="2">3.6.5.3</ecNumber>
    </recommendedName>
</protein>
<reference key="1">
    <citation type="journal article" date="2010" name="Genome Biol.">
        <title>Structure and dynamics of the pan-genome of Streptococcus pneumoniae and closely related species.</title>
        <authorList>
            <person name="Donati C."/>
            <person name="Hiller N.L."/>
            <person name="Tettelin H."/>
            <person name="Muzzi A."/>
            <person name="Croucher N.J."/>
            <person name="Angiuoli S.V."/>
            <person name="Oggioni M."/>
            <person name="Dunning Hotopp J.C."/>
            <person name="Hu F.Z."/>
            <person name="Riley D.R."/>
            <person name="Covacci A."/>
            <person name="Mitchell T.J."/>
            <person name="Bentley S.D."/>
            <person name="Kilian M."/>
            <person name="Ehrlich G.D."/>
            <person name="Rappuoli R."/>
            <person name="Moxon E.R."/>
            <person name="Masignani V."/>
        </authorList>
    </citation>
    <scope>NUCLEOTIDE SEQUENCE [LARGE SCALE GENOMIC DNA]</scope>
    <source>
        <strain>Hungary19A-6</strain>
    </source>
</reference>
<name>EFTU_STRPI</name>
<gene>
    <name evidence="2" type="primary">tuf</name>
    <name type="ordered locus">SPH_1601</name>
</gene>
<dbReference type="EC" id="3.6.5.3" evidence="2"/>
<dbReference type="EMBL" id="CP000936">
    <property type="protein sequence ID" value="ACA35953.1"/>
    <property type="molecule type" value="Genomic_DNA"/>
</dbReference>
<dbReference type="RefSeq" id="WP_001040724.1">
    <property type="nucleotide sequence ID" value="NC_010380.1"/>
</dbReference>
<dbReference type="SMR" id="B1ICR4"/>
<dbReference type="GeneID" id="45653269"/>
<dbReference type="KEGG" id="spv:SPH_1601"/>
<dbReference type="HOGENOM" id="CLU_007265_0_1_9"/>
<dbReference type="Proteomes" id="UP000002163">
    <property type="component" value="Chromosome"/>
</dbReference>
<dbReference type="GO" id="GO:0005829">
    <property type="term" value="C:cytosol"/>
    <property type="evidence" value="ECO:0007669"/>
    <property type="project" value="TreeGrafter"/>
</dbReference>
<dbReference type="GO" id="GO:0005525">
    <property type="term" value="F:GTP binding"/>
    <property type="evidence" value="ECO:0007669"/>
    <property type="project" value="UniProtKB-UniRule"/>
</dbReference>
<dbReference type="GO" id="GO:0003924">
    <property type="term" value="F:GTPase activity"/>
    <property type="evidence" value="ECO:0007669"/>
    <property type="project" value="InterPro"/>
</dbReference>
<dbReference type="GO" id="GO:0003746">
    <property type="term" value="F:translation elongation factor activity"/>
    <property type="evidence" value="ECO:0007669"/>
    <property type="project" value="UniProtKB-UniRule"/>
</dbReference>
<dbReference type="CDD" id="cd01884">
    <property type="entry name" value="EF_Tu"/>
    <property type="match status" value="1"/>
</dbReference>
<dbReference type="CDD" id="cd03697">
    <property type="entry name" value="EFTU_II"/>
    <property type="match status" value="1"/>
</dbReference>
<dbReference type="CDD" id="cd03707">
    <property type="entry name" value="EFTU_III"/>
    <property type="match status" value="1"/>
</dbReference>
<dbReference type="FunFam" id="2.40.30.10:FF:000001">
    <property type="entry name" value="Elongation factor Tu"/>
    <property type="match status" value="1"/>
</dbReference>
<dbReference type="FunFam" id="3.40.50.300:FF:000003">
    <property type="entry name" value="Elongation factor Tu"/>
    <property type="match status" value="1"/>
</dbReference>
<dbReference type="Gene3D" id="3.40.50.300">
    <property type="entry name" value="P-loop containing nucleotide triphosphate hydrolases"/>
    <property type="match status" value="1"/>
</dbReference>
<dbReference type="Gene3D" id="2.40.30.10">
    <property type="entry name" value="Translation factors"/>
    <property type="match status" value="2"/>
</dbReference>
<dbReference type="HAMAP" id="MF_00118_B">
    <property type="entry name" value="EF_Tu_B"/>
    <property type="match status" value="1"/>
</dbReference>
<dbReference type="InterPro" id="IPR041709">
    <property type="entry name" value="EF-Tu_GTP-bd"/>
</dbReference>
<dbReference type="InterPro" id="IPR050055">
    <property type="entry name" value="EF-Tu_GTPase"/>
</dbReference>
<dbReference type="InterPro" id="IPR004161">
    <property type="entry name" value="EFTu-like_2"/>
</dbReference>
<dbReference type="InterPro" id="IPR033720">
    <property type="entry name" value="EFTU_2"/>
</dbReference>
<dbReference type="InterPro" id="IPR031157">
    <property type="entry name" value="G_TR_CS"/>
</dbReference>
<dbReference type="InterPro" id="IPR027417">
    <property type="entry name" value="P-loop_NTPase"/>
</dbReference>
<dbReference type="InterPro" id="IPR005225">
    <property type="entry name" value="Small_GTP-bd"/>
</dbReference>
<dbReference type="InterPro" id="IPR000795">
    <property type="entry name" value="T_Tr_GTP-bd_dom"/>
</dbReference>
<dbReference type="InterPro" id="IPR009000">
    <property type="entry name" value="Transl_B-barrel_sf"/>
</dbReference>
<dbReference type="InterPro" id="IPR009001">
    <property type="entry name" value="Transl_elong_EF1A/Init_IF2_C"/>
</dbReference>
<dbReference type="InterPro" id="IPR004541">
    <property type="entry name" value="Transl_elong_EFTu/EF1A_bac/org"/>
</dbReference>
<dbReference type="InterPro" id="IPR004160">
    <property type="entry name" value="Transl_elong_EFTu/EF1A_C"/>
</dbReference>
<dbReference type="NCBIfam" id="TIGR00485">
    <property type="entry name" value="EF-Tu"/>
    <property type="match status" value="1"/>
</dbReference>
<dbReference type="NCBIfam" id="NF000766">
    <property type="entry name" value="PRK00049.1"/>
    <property type="match status" value="1"/>
</dbReference>
<dbReference type="NCBIfam" id="NF009372">
    <property type="entry name" value="PRK12735.1"/>
    <property type="match status" value="1"/>
</dbReference>
<dbReference type="NCBIfam" id="NF009373">
    <property type="entry name" value="PRK12736.1"/>
    <property type="match status" value="1"/>
</dbReference>
<dbReference type="NCBIfam" id="TIGR00231">
    <property type="entry name" value="small_GTP"/>
    <property type="match status" value="1"/>
</dbReference>
<dbReference type="PANTHER" id="PTHR43721:SF22">
    <property type="entry name" value="ELONGATION FACTOR TU, MITOCHONDRIAL"/>
    <property type="match status" value="1"/>
</dbReference>
<dbReference type="PANTHER" id="PTHR43721">
    <property type="entry name" value="ELONGATION FACTOR TU-RELATED"/>
    <property type="match status" value="1"/>
</dbReference>
<dbReference type="Pfam" id="PF00009">
    <property type="entry name" value="GTP_EFTU"/>
    <property type="match status" value="1"/>
</dbReference>
<dbReference type="Pfam" id="PF03144">
    <property type="entry name" value="GTP_EFTU_D2"/>
    <property type="match status" value="1"/>
</dbReference>
<dbReference type="Pfam" id="PF03143">
    <property type="entry name" value="GTP_EFTU_D3"/>
    <property type="match status" value="1"/>
</dbReference>
<dbReference type="PRINTS" id="PR00315">
    <property type="entry name" value="ELONGATNFCT"/>
</dbReference>
<dbReference type="SUPFAM" id="SSF50465">
    <property type="entry name" value="EF-Tu/eEF-1alpha/eIF2-gamma C-terminal domain"/>
    <property type="match status" value="1"/>
</dbReference>
<dbReference type="SUPFAM" id="SSF52540">
    <property type="entry name" value="P-loop containing nucleoside triphosphate hydrolases"/>
    <property type="match status" value="1"/>
</dbReference>
<dbReference type="SUPFAM" id="SSF50447">
    <property type="entry name" value="Translation proteins"/>
    <property type="match status" value="1"/>
</dbReference>
<dbReference type="PROSITE" id="PS00301">
    <property type="entry name" value="G_TR_1"/>
    <property type="match status" value="1"/>
</dbReference>
<dbReference type="PROSITE" id="PS51722">
    <property type="entry name" value="G_TR_2"/>
    <property type="match status" value="1"/>
</dbReference>